<gene>
    <name evidence="7" type="primary">srb-12</name>
    <name evidence="7" type="ORF">F58A6.10</name>
</gene>
<sequence>MSEANLTECELAYQLTYHPFYMIAQFWSFFVSLLAMPSLIFFMVEKVFKLPFHGNLKFLLVSYFIGTFLFASIICFTFGYHFFVPFFVTSNCDLIINATLFKYGHMIALIFMTIPMILPTAFTVERFVALKMAHSYEHVRTLLGPVLVLVVIAIDSMFLYDIYGQEKFDKPFINFILVPATSALQFNSFLWYMLYLKITNFICNLILLFIHKILHQSSRYRRKNVSLSVKYEMQEISQSSRFTLIVTFTHLLFFGWYVSTILLIRTVGPDFFRGFINYTVMRGVYCATPTYNLVIVFIGFKALNHLNFKRNNKVQSTIQIKSTGQEGAENYDNAISNYWDSVYTMNKSKL</sequence>
<protein>
    <recommendedName>
        <fullName evidence="7">Serpentine receptor class beta-12</fullName>
        <shortName evidence="4">Protein srb-12</shortName>
    </recommendedName>
</protein>
<proteinExistence type="evidence at transcript level"/>
<accession>A0A3B1DZW5</accession>
<accession>Q20962</accession>
<comment type="function">
    <text evidence="3 4">G-protein coupled receptor (Probable). Plays a role in the navigational capacity of sperm and promotes the targeting of sperm derived from males to the fertilization site in the uterus of hermaphrodites (PubMed:28662030).</text>
</comment>
<comment type="subcellular location">
    <subcellularLocation>
        <location evidence="4">Cell membrane</location>
        <topology evidence="1">Multi-pass membrane protein</topology>
    </subcellularLocation>
    <subcellularLocation>
        <location evidence="3">Perikaryon</location>
    </subcellularLocation>
    <subcellularLocation>
        <location evidence="3">Cell projection</location>
        <location evidence="3">Dendrite</location>
    </subcellularLocation>
</comment>
<comment type="alternative products">
    <event type="alternative splicing"/>
    <isoform>
        <id>A0A3B1DZW5-1</id>
        <name evidence="7">b</name>
        <sequence type="displayed"/>
    </isoform>
    <isoform>
        <id>A0A3B1DZW5-2</id>
        <name evidence="6">a</name>
        <sequence type="described" ref="VSP_060171"/>
    </isoform>
</comment>
<comment type="tissue specificity">
    <text evidence="3">Expressed throughout the head.</text>
</comment>
<comment type="disruption phenotype">
    <text evidence="3">Abnormal distribution of male-derived sperm in the hermaphrodite uterus following mating, with sperm accumulating at the spermathecal-uterine valve 1 hour following mating.</text>
</comment>
<comment type="similarity">
    <text evidence="4">Belongs to the nematode receptor-like protein srb family.</text>
</comment>
<dbReference type="EMBL" id="BX284602">
    <property type="protein sequence ID" value="CCD65840.1"/>
    <property type="molecule type" value="Genomic_DNA"/>
</dbReference>
<dbReference type="EMBL" id="BX284602">
    <property type="protein sequence ID" value="VAY52132.1"/>
    <property type="molecule type" value="Genomic_DNA"/>
</dbReference>
<dbReference type="PIR" id="T16497">
    <property type="entry name" value="T16497"/>
</dbReference>
<dbReference type="RefSeq" id="NP_001355415.1">
    <molecule id="A0A3B1DZW5-1"/>
    <property type="nucleotide sequence ID" value="NM_001368586.3"/>
</dbReference>
<dbReference type="RefSeq" id="NP_494957.1">
    <molecule id="A0A3B1DZW5-2"/>
    <property type="nucleotide sequence ID" value="NM_062556.3"/>
</dbReference>
<dbReference type="FunCoup" id="A0A3B1DZW5">
    <property type="interactions" value="3"/>
</dbReference>
<dbReference type="STRING" id="6239.F58A6.10b.1"/>
<dbReference type="GlyCosmos" id="A0A3B1DZW5">
    <property type="glycosylation" value="3 sites, No reported glycans"/>
</dbReference>
<dbReference type="PaxDb" id="6239-F58A6.10"/>
<dbReference type="EnsemblMetazoa" id="F58A6.10a.1">
    <molecule id="A0A3B1DZW5-2"/>
    <property type="protein sequence ID" value="F58A6.10a.1"/>
    <property type="gene ID" value="WBGene00019027"/>
</dbReference>
<dbReference type="EnsemblMetazoa" id="F58A6.10b.1">
    <molecule id="A0A3B1DZW5-1"/>
    <property type="protein sequence ID" value="F58A6.10b.1"/>
    <property type="gene ID" value="WBGene00019027"/>
</dbReference>
<dbReference type="GeneID" id="186490"/>
<dbReference type="KEGG" id="cel:CELE_F58A6.10"/>
<dbReference type="UCSC" id="F58A6.10">
    <property type="organism name" value="c. elegans"/>
</dbReference>
<dbReference type="AGR" id="WB:WBGene00019027"/>
<dbReference type="CTD" id="186490"/>
<dbReference type="WormBase" id="F58A6.10a">
    <molecule id="A0A3B1DZW5-2"/>
    <property type="protein sequence ID" value="CE07296"/>
    <property type="gene ID" value="WBGene00019027"/>
    <property type="gene designation" value="srb-12"/>
</dbReference>
<dbReference type="WormBase" id="F58A6.10b">
    <molecule id="A0A3B1DZW5-1"/>
    <property type="protein sequence ID" value="CE52747"/>
    <property type="gene ID" value="WBGene00019027"/>
    <property type="gene designation" value="srb-12"/>
</dbReference>
<dbReference type="eggNOG" id="ENOG502RT5J">
    <property type="taxonomic scope" value="Eukaryota"/>
</dbReference>
<dbReference type="GeneTree" id="ENSGT00970000195867"/>
<dbReference type="HOGENOM" id="CLU_045882_1_0_1"/>
<dbReference type="InParanoid" id="A0A3B1DZW5"/>
<dbReference type="OMA" id="YCATPTY"/>
<dbReference type="OrthoDB" id="5820060at2759"/>
<dbReference type="PRO" id="PR:A0A3B1DZW5"/>
<dbReference type="Proteomes" id="UP000001940">
    <property type="component" value="Chromosome II"/>
</dbReference>
<dbReference type="GO" id="GO:0030425">
    <property type="term" value="C:dendrite"/>
    <property type="evidence" value="ECO:0007669"/>
    <property type="project" value="UniProtKB-SubCell"/>
</dbReference>
<dbReference type="GO" id="GO:0043204">
    <property type="term" value="C:perikaryon"/>
    <property type="evidence" value="ECO:0007669"/>
    <property type="project" value="UniProtKB-SubCell"/>
</dbReference>
<dbReference type="GO" id="GO:0005886">
    <property type="term" value="C:plasma membrane"/>
    <property type="evidence" value="ECO:0007669"/>
    <property type="project" value="UniProtKB-SubCell"/>
</dbReference>
<dbReference type="GO" id="GO:0004930">
    <property type="term" value="F:G protein-coupled receptor activity"/>
    <property type="evidence" value="ECO:0007669"/>
    <property type="project" value="UniProtKB-KW"/>
</dbReference>
<dbReference type="GO" id="GO:0007606">
    <property type="term" value="P:sensory perception of chemical stimulus"/>
    <property type="evidence" value="ECO:0007669"/>
    <property type="project" value="InterPro"/>
</dbReference>
<dbReference type="InterPro" id="IPR002184">
    <property type="entry name" value="7TM_GPCR_serpentine_rcpt_Srb"/>
</dbReference>
<dbReference type="PANTHER" id="PTHR31216">
    <property type="entry name" value="SERPENTINE RECEPTOR CLASS BETA-1-RELATED-RELATED"/>
    <property type="match status" value="1"/>
</dbReference>
<dbReference type="PANTHER" id="PTHR31216:SF4">
    <property type="entry name" value="SERPENTINE RECEPTOR CLASS BETA-12"/>
    <property type="match status" value="1"/>
</dbReference>
<dbReference type="Pfam" id="PF02175">
    <property type="entry name" value="7TM_GPCR_Srb"/>
    <property type="match status" value="1"/>
</dbReference>
<dbReference type="PRINTS" id="PR00699">
    <property type="entry name" value="TMPROTEINSRB"/>
</dbReference>
<feature type="chain" id="PRO_0000447258" description="Serpentine receptor class beta-12">
    <location>
        <begin position="1"/>
        <end position="350"/>
    </location>
</feature>
<feature type="topological domain" description="Extracellular" evidence="4">
    <location>
        <begin position="1"/>
        <end position="21"/>
    </location>
</feature>
<feature type="transmembrane region" description="Helical; Name=1" evidence="1">
    <location>
        <begin position="22"/>
        <end position="42"/>
    </location>
</feature>
<feature type="topological domain" description="Cytoplasmic" evidence="4">
    <location>
        <begin position="43"/>
        <end position="57"/>
    </location>
</feature>
<feature type="transmembrane region" description="Helical; Name=2" evidence="1">
    <location>
        <begin position="58"/>
        <end position="78"/>
    </location>
</feature>
<feature type="topological domain" description="Extracellular" evidence="4">
    <location>
        <begin position="79"/>
        <end position="103"/>
    </location>
</feature>
<feature type="transmembrane region" description="Helical; Name=3" evidence="1">
    <location>
        <begin position="104"/>
        <end position="124"/>
    </location>
</feature>
<feature type="topological domain" description="Cytoplasmic" evidence="4">
    <location>
        <begin position="125"/>
        <end position="141"/>
    </location>
</feature>
<feature type="transmembrane region" description="Helical; Name=4" evidence="1">
    <location>
        <begin position="142"/>
        <end position="162"/>
    </location>
</feature>
<feature type="topological domain" description="Extracellular" evidence="4">
    <location>
        <begin position="163"/>
        <end position="189"/>
    </location>
</feature>
<feature type="transmembrane region" description="Helical; Name=5" evidence="1">
    <location>
        <begin position="190"/>
        <end position="210"/>
    </location>
</feature>
<feature type="topological domain" description="Cytoplasmic" evidence="4">
    <location>
        <begin position="211"/>
        <end position="243"/>
    </location>
</feature>
<feature type="transmembrane region" description="Helical; Name=6" evidence="1">
    <location>
        <begin position="244"/>
        <end position="264"/>
    </location>
</feature>
<feature type="topological domain" description="Extracellular" evidence="4">
    <location>
        <begin position="265"/>
        <end position="282"/>
    </location>
</feature>
<feature type="transmembrane region" description="Helical; Name=7" evidence="1">
    <location>
        <begin position="283"/>
        <end position="303"/>
    </location>
</feature>
<feature type="topological domain" description="Cytoplasmic" evidence="4">
    <location>
        <begin position="304"/>
        <end position="350"/>
    </location>
</feature>
<feature type="glycosylation site" description="N-linked (GlcNAc...) asparagine" evidence="2">
    <location>
        <position position="5"/>
    </location>
</feature>
<feature type="glycosylation site" description="N-linked (GlcNAc...) asparagine" evidence="2">
    <location>
        <position position="97"/>
    </location>
</feature>
<feature type="glycosylation site" description="N-linked (GlcNAc...) asparagine" evidence="2">
    <location>
        <position position="277"/>
    </location>
</feature>
<feature type="splice variant" id="VSP_060171" description="In isoform a." evidence="4">
    <location>
        <begin position="217"/>
        <end position="218"/>
    </location>
</feature>
<evidence type="ECO:0000255" key="1"/>
<evidence type="ECO:0000255" key="2">
    <source>
        <dbReference type="PROSITE-ProRule" id="PRU00498"/>
    </source>
</evidence>
<evidence type="ECO:0000269" key="3">
    <source>
    </source>
</evidence>
<evidence type="ECO:0000305" key="4"/>
<evidence type="ECO:0000312" key="5">
    <source>
        <dbReference type="Proteomes" id="UP000001940"/>
    </source>
</evidence>
<evidence type="ECO:0000312" key="6">
    <source>
        <dbReference type="WormBase" id="F58A6.10a"/>
    </source>
</evidence>
<evidence type="ECO:0000312" key="7">
    <source>
        <dbReference type="WormBase" id="F58A6.10b"/>
    </source>
</evidence>
<keyword id="KW-0025">Alternative splicing</keyword>
<keyword id="KW-1003">Cell membrane</keyword>
<keyword id="KW-0966">Cell projection</keyword>
<keyword id="KW-0297">G-protein coupled receptor</keyword>
<keyword id="KW-0325">Glycoprotein</keyword>
<keyword id="KW-0472">Membrane</keyword>
<keyword id="KW-0675">Receptor</keyword>
<keyword id="KW-1185">Reference proteome</keyword>
<keyword id="KW-0807">Transducer</keyword>
<keyword id="KW-0812">Transmembrane</keyword>
<keyword id="KW-1133">Transmembrane helix</keyword>
<organism evidence="5">
    <name type="scientific">Caenorhabditis elegans</name>
    <dbReference type="NCBI Taxonomy" id="6239"/>
    <lineage>
        <taxon>Eukaryota</taxon>
        <taxon>Metazoa</taxon>
        <taxon>Ecdysozoa</taxon>
        <taxon>Nematoda</taxon>
        <taxon>Chromadorea</taxon>
        <taxon>Rhabditida</taxon>
        <taxon>Rhabditina</taxon>
        <taxon>Rhabditomorpha</taxon>
        <taxon>Rhabditoidea</taxon>
        <taxon>Rhabditidae</taxon>
        <taxon>Peloderinae</taxon>
        <taxon>Caenorhabditis</taxon>
    </lineage>
</organism>
<name>SRB12_CAEEL</name>
<reference evidence="5" key="1">
    <citation type="journal article" date="1998" name="Science">
        <title>Genome sequence of the nematode C. elegans: a platform for investigating biology.</title>
        <authorList>
            <consortium name="The C. elegans sequencing consortium"/>
        </authorList>
    </citation>
    <scope>NUCLEOTIDE SEQUENCE [LARGE SCALE GENOMIC DNA]</scope>
    <source>
        <strain evidence="5">Bristol N2</strain>
    </source>
</reference>
<reference evidence="4" key="2">
    <citation type="journal article" date="2017" name="PLoS Biol.">
        <title>Chemosensory and hyperoxia circuits in C. elegans males influence sperm navigational capacity.</title>
        <authorList>
            <person name="Hoang H.D."/>
            <person name="Miller M.A."/>
        </authorList>
    </citation>
    <scope>FUNCTION</scope>
    <scope>SUBCELLULAR LOCATION</scope>
    <scope>TISSUE SPECIFICITY</scope>
    <scope>DISRUPTION PHENOTYPE</scope>
</reference>